<accession>Q59045</accession>
<dbReference type="EC" id="3.13.2.3" evidence="3"/>
<dbReference type="EMBL" id="L77117">
    <property type="protein sequence ID" value="AAB99672.1"/>
    <property type="molecule type" value="Genomic_DNA"/>
</dbReference>
<dbReference type="PIR" id="A64506">
    <property type="entry name" value="A64506"/>
</dbReference>
<dbReference type="PDB" id="2F4N">
    <property type="method" value="X-ray"/>
    <property type="resolution" value="2.50 A"/>
    <property type="chains" value="A/B/C=2-261"/>
</dbReference>
<dbReference type="PDBsum" id="2F4N"/>
<dbReference type="SMR" id="Q59045"/>
<dbReference type="STRING" id="243232.MJ_1651"/>
<dbReference type="PaxDb" id="243232-MJ_1651"/>
<dbReference type="EnsemblBacteria" id="AAB99672">
    <property type="protein sequence ID" value="AAB99672"/>
    <property type="gene ID" value="MJ_1651"/>
</dbReference>
<dbReference type="KEGG" id="mja:MJ_1651"/>
<dbReference type="eggNOG" id="arCOG04309">
    <property type="taxonomic scope" value="Archaea"/>
</dbReference>
<dbReference type="HOGENOM" id="CLU_059734_1_1_2"/>
<dbReference type="InParanoid" id="Q59045"/>
<dbReference type="PhylomeDB" id="Q59045"/>
<dbReference type="EvolutionaryTrace" id="Q59045"/>
<dbReference type="Proteomes" id="UP000000805">
    <property type="component" value="Chromosome"/>
</dbReference>
<dbReference type="GO" id="GO:0016787">
    <property type="term" value="F:hydrolase activity"/>
    <property type="evidence" value="ECO:0007669"/>
    <property type="project" value="UniProtKB-KW"/>
</dbReference>
<dbReference type="Gene3D" id="2.40.30.90">
    <property type="entry name" value="Bacterial fluorinating enzyme like"/>
    <property type="match status" value="1"/>
</dbReference>
<dbReference type="Gene3D" id="3.40.50.10790">
    <property type="entry name" value="S-adenosyl-l-methionine hydroxide adenosyltransferase, N-terminal"/>
    <property type="match status" value="1"/>
</dbReference>
<dbReference type="InterPro" id="IPR046470">
    <property type="entry name" value="SAM_HAT_C"/>
</dbReference>
<dbReference type="InterPro" id="IPR046469">
    <property type="entry name" value="SAM_HAT_N"/>
</dbReference>
<dbReference type="InterPro" id="IPR002747">
    <property type="entry name" value="SAM_OH_AdoTrfase"/>
</dbReference>
<dbReference type="InterPro" id="IPR023227">
    <property type="entry name" value="SAM_OH_AdoTrfase_C_sf"/>
</dbReference>
<dbReference type="InterPro" id="IPR023228">
    <property type="entry name" value="SAM_OH_AdoTrfase_N_sf"/>
</dbReference>
<dbReference type="PANTHER" id="PTHR35092">
    <property type="entry name" value="CHLORINASE MJ1651"/>
    <property type="match status" value="1"/>
</dbReference>
<dbReference type="PANTHER" id="PTHR35092:SF1">
    <property type="entry name" value="CHLORINASE MJ1651"/>
    <property type="match status" value="1"/>
</dbReference>
<dbReference type="Pfam" id="PF20257">
    <property type="entry name" value="SAM_HAT_C"/>
    <property type="match status" value="1"/>
</dbReference>
<dbReference type="Pfam" id="PF01887">
    <property type="entry name" value="SAM_HAT_N"/>
    <property type="match status" value="1"/>
</dbReference>
<dbReference type="PIRSF" id="PIRSF006779">
    <property type="entry name" value="UCP006779"/>
    <property type="match status" value="1"/>
</dbReference>
<dbReference type="SUPFAM" id="SSF101852">
    <property type="entry name" value="Bacterial fluorinating enzyme, C-terminal domain"/>
    <property type="match status" value="1"/>
</dbReference>
<dbReference type="SUPFAM" id="SSF102522">
    <property type="entry name" value="Bacterial fluorinating enzyme, N-terminal domain"/>
    <property type="match status" value="1"/>
</dbReference>
<name>RSAMH_METJA</name>
<reference key="1">
    <citation type="journal article" date="1996" name="Science">
        <title>Complete genome sequence of the methanogenic archaeon, Methanococcus jannaschii.</title>
        <authorList>
            <person name="Bult C.J."/>
            <person name="White O."/>
            <person name="Olsen G.J."/>
            <person name="Zhou L."/>
            <person name="Fleischmann R.D."/>
            <person name="Sutton G.G."/>
            <person name="Blake J.A."/>
            <person name="FitzGerald L.M."/>
            <person name="Clayton R.A."/>
            <person name="Gocayne J.D."/>
            <person name="Kerlavage A.R."/>
            <person name="Dougherty B.A."/>
            <person name="Tomb J.-F."/>
            <person name="Adams M.D."/>
            <person name="Reich C.I."/>
            <person name="Overbeek R."/>
            <person name="Kirkness E.F."/>
            <person name="Weinstock K.G."/>
            <person name="Merrick J.M."/>
            <person name="Glodek A."/>
            <person name="Scott J.L."/>
            <person name="Geoghagen N.S.M."/>
            <person name="Weidman J.F."/>
            <person name="Fuhrmann J.L."/>
            <person name="Nguyen D."/>
            <person name="Utterback T.R."/>
            <person name="Kelley J.M."/>
            <person name="Peterson J.D."/>
            <person name="Sadow P.W."/>
            <person name="Hanna M.C."/>
            <person name="Cotton M.D."/>
            <person name="Roberts K.M."/>
            <person name="Hurst M.A."/>
            <person name="Kaine B.P."/>
            <person name="Borodovsky M."/>
            <person name="Klenk H.-P."/>
            <person name="Fraser C.M."/>
            <person name="Smith H.O."/>
            <person name="Woese C.R."/>
            <person name="Venter J.C."/>
        </authorList>
    </citation>
    <scope>NUCLEOTIDE SEQUENCE [LARGE SCALE GENOMIC DNA]</scope>
    <source>
        <strain>ATCC 43067 / DSM 2661 / JAL-1 / JCM 10045 / NBRC 100440</strain>
    </source>
</reference>
<reference key="2">
    <citation type="journal article" date="2023" name="Science">
        <title>Enzyme function prediction using contrastive learning.</title>
        <authorList>
            <person name="Yu T."/>
            <person name="Cui H."/>
            <person name="Li J.C."/>
            <person name="Luo Y."/>
            <person name="Jiang G."/>
            <person name="Zhao H."/>
        </authorList>
    </citation>
    <scope>FUNCTION</scope>
    <scope>CATALYTIC ACTIVITY</scope>
    <scope>BIOPHYSICOCHEMICAL PROPERTIES</scope>
</reference>
<reference evidence="5" key="3">
    <citation type="journal article" date="2008" name="Proteins">
        <title>Crystal structure of a conserved protein of unknown function (MJ1651) from Methanococcus jannaschii.</title>
        <authorList>
            <person name="Rao K.N."/>
            <person name="Burley S.K."/>
            <person name="Swaminathan S."/>
        </authorList>
    </citation>
    <scope>X-RAY CRYSTALLOGRAPHY (2.5 ANGSTROMS) OF 2-261</scope>
    <scope>SUBUNIT</scope>
</reference>
<proteinExistence type="evidence at protein level"/>
<sequence length="263" mass="30249">MGIYMRDDILDIITLTTDFGTNEGYVGAMKGRILNILKKYNKDAKIIDISHEIKPFNIYHGAYVLLTAIPYFPPSVHVAVIDPTVGSERKSIVIETKSGYYLVGPDNGLFTYVAEKLGIKRIIKIDEERYKPSSTFHGRDVYAVVGAEILINNGYDGEELDEMVKIDETKKRVIHIDRFGNIITNIKKDEVTFKYYDTIMIKIRHKNGIEKIIKCKFVKSYFEEKNNFICLINSEGFLEISKFMDNASKLLNVDYLDEIEIIY</sequence>
<feature type="chain" id="PRO_0000107459" description="(R)-S-adenosyl-L-methionine hydrolase">
    <location>
        <begin position="1"/>
        <end position="263"/>
    </location>
</feature>
<feature type="binding site" evidence="1">
    <location>
        <position position="18"/>
    </location>
    <ligand>
        <name>adenosine</name>
        <dbReference type="ChEBI" id="CHEBI:16335"/>
    </ligand>
</feature>
<feature type="binding site" evidence="1">
    <location>
        <position position="82"/>
    </location>
    <ligand>
        <name>adenosine</name>
        <dbReference type="ChEBI" id="CHEBI:16335"/>
    </ligand>
</feature>
<feature type="binding site" evidence="1">
    <location>
        <position position="181"/>
    </location>
    <ligand>
        <name>(R)-S-adenosyl-L-methionine</name>
        <dbReference type="ChEBI" id="CHEBI:142093"/>
    </ligand>
</feature>
<feature type="binding site" evidence="1">
    <location>
        <position position="181"/>
    </location>
    <ligand>
        <name>adenosine</name>
        <dbReference type="ChEBI" id="CHEBI:16335"/>
    </ligand>
</feature>
<feature type="binding site" evidence="1">
    <location>
        <position position="221"/>
    </location>
    <ligand>
        <name>(R)-S-adenosyl-L-methionine</name>
        <dbReference type="ChEBI" id="CHEBI:142093"/>
    </ligand>
</feature>
<feature type="binding site" evidence="1">
    <location>
        <position position="234"/>
    </location>
    <ligand>
        <name>(R)-S-adenosyl-L-methionine</name>
        <dbReference type="ChEBI" id="CHEBI:142093"/>
    </ligand>
</feature>
<feature type="binding site" evidence="1">
    <location>
        <position position="239"/>
    </location>
    <ligand>
        <name>(R)-S-adenosyl-L-methionine</name>
        <dbReference type="ChEBI" id="CHEBI:142093"/>
    </ligand>
</feature>
<feature type="binding site" evidence="1">
    <location>
        <position position="244"/>
    </location>
    <ligand>
        <name>(R)-S-adenosyl-L-methionine</name>
        <dbReference type="ChEBI" id="CHEBI:142093"/>
    </ligand>
</feature>
<feature type="site" description="Important for activity" evidence="1">
    <location>
        <position position="82"/>
    </location>
</feature>
<feature type="site" description="Important for activity" evidence="1">
    <location>
        <position position="89"/>
    </location>
</feature>
<feature type="site" description="Important for activity" evidence="1">
    <location>
        <position position="137"/>
    </location>
</feature>
<feature type="strand" evidence="6">
    <location>
        <begin position="12"/>
        <end position="18"/>
    </location>
</feature>
<feature type="strand" evidence="6">
    <location>
        <begin position="21"/>
        <end position="24"/>
    </location>
</feature>
<feature type="helix" evidence="6">
    <location>
        <begin position="25"/>
        <end position="38"/>
    </location>
</feature>
<feature type="turn" evidence="6">
    <location>
        <begin position="39"/>
        <end position="41"/>
    </location>
</feature>
<feature type="strand" evidence="6">
    <location>
        <begin position="45"/>
        <end position="51"/>
    </location>
</feature>
<feature type="helix" evidence="6">
    <location>
        <begin position="58"/>
        <end position="68"/>
    </location>
</feature>
<feature type="helix" evidence="6">
    <location>
        <begin position="69"/>
        <end position="71"/>
    </location>
</feature>
<feature type="strand" evidence="6">
    <location>
        <begin position="76"/>
        <end position="80"/>
    </location>
</feature>
<feature type="strand" evidence="6">
    <location>
        <begin position="91"/>
        <end position="96"/>
    </location>
</feature>
<feature type="strand" evidence="6">
    <location>
        <begin position="101"/>
        <end position="108"/>
    </location>
</feature>
<feature type="helix" evidence="6">
    <location>
        <begin position="111"/>
        <end position="117"/>
    </location>
</feature>
<feature type="strand" evidence="6">
    <location>
        <begin position="119"/>
        <end position="124"/>
    </location>
</feature>
<feature type="helix" evidence="6">
    <location>
        <begin position="139"/>
        <end position="152"/>
    </location>
</feature>
<feature type="strand" evidence="6">
    <location>
        <begin position="172"/>
        <end position="176"/>
    </location>
</feature>
<feature type="strand" evidence="6">
    <location>
        <begin position="178"/>
        <end position="180"/>
    </location>
</feature>
<feature type="strand" evidence="6">
    <location>
        <begin position="182"/>
        <end position="185"/>
    </location>
</feature>
<feature type="helix" evidence="6">
    <location>
        <begin position="188"/>
        <end position="190"/>
    </location>
</feature>
<feature type="strand" evidence="6">
    <location>
        <begin position="199"/>
        <end position="204"/>
    </location>
</feature>
<feature type="strand" evidence="6">
    <location>
        <begin position="206"/>
        <end position="208"/>
    </location>
</feature>
<feature type="strand" evidence="6">
    <location>
        <begin position="210"/>
        <end position="217"/>
    </location>
</feature>
<feature type="strand" evidence="6">
    <location>
        <begin position="219"/>
        <end position="222"/>
    </location>
</feature>
<feature type="turn" evidence="6">
    <location>
        <begin position="223"/>
        <end position="226"/>
    </location>
</feature>
<feature type="strand" evidence="6">
    <location>
        <begin position="229"/>
        <end position="232"/>
    </location>
</feature>
<feature type="strand" evidence="6">
    <location>
        <begin position="238"/>
        <end position="241"/>
    </location>
</feature>
<feature type="helix" evidence="6">
    <location>
        <begin position="247"/>
        <end position="251"/>
    </location>
</feature>
<feature type="strand" evidence="6">
    <location>
        <begin position="258"/>
        <end position="261"/>
    </location>
</feature>
<keyword id="KW-0002">3D-structure</keyword>
<keyword id="KW-0378">Hydrolase</keyword>
<keyword id="KW-1185">Reference proteome</keyword>
<keyword id="KW-0949">S-adenosyl-L-methionine</keyword>
<protein>
    <recommendedName>
        <fullName evidence="4">(R)-S-adenosyl-L-methionine hydrolase</fullName>
        <ecNumber evidence="3">3.13.2.3</ecNumber>
    </recommendedName>
    <alternativeName>
        <fullName evidence="4">S-adenosyl-L-methionine hydrolase (adenosine-forming)</fullName>
        <shortName evidence="4">SAM hydrolase (adenosine-forming)</shortName>
    </alternativeName>
</protein>
<evidence type="ECO:0000250" key="1">
    <source>
        <dbReference type="UniProtKB" id="O58212"/>
    </source>
</evidence>
<evidence type="ECO:0000269" key="2">
    <source>
    </source>
</evidence>
<evidence type="ECO:0000269" key="3">
    <source>
    </source>
</evidence>
<evidence type="ECO:0000305" key="4"/>
<evidence type="ECO:0007744" key="5">
    <source>
        <dbReference type="PDB" id="2F4N"/>
    </source>
</evidence>
<evidence type="ECO:0007829" key="6">
    <source>
        <dbReference type="PDB" id="2F4N"/>
    </source>
</evidence>
<gene>
    <name type="ordered locus">MJ1651</name>
</gene>
<comment type="function">
    <text evidence="3">Catalyzes the hydrolysis of S-adenosyl-L-methionine (SAM) into adenosine and L-methionine (PubMed:36996195). Does not have chlorinase or fluorinase activity (PubMed:36996195).</text>
</comment>
<comment type="catalytic activity">
    <reaction evidence="3">
        <text>(R)-S-adenosyl-L-methionine + H2O = adenosine + L-methionine + H(+)</text>
        <dbReference type="Rhea" id="RHEA:67240"/>
        <dbReference type="ChEBI" id="CHEBI:15377"/>
        <dbReference type="ChEBI" id="CHEBI:15378"/>
        <dbReference type="ChEBI" id="CHEBI:16335"/>
        <dbReference type="ChEBI" id="CHEBI:57844"/>
        <dbReference type="ChEBI" id="CHEBI:142093"/>
        <dbReference type="EC" id="3.13.2.3"/>
    </reaction>
</comment>
<comment type="biophysicochemical properties">
    <kinetics>
        <KM evidence="3">82.6 uM for S-adenosyl-L-methionine</KM>
        <text evidence="3">kcat is 0.327 min(-1).</text>
    </kinetics>
</comment>
<comment type="subunit">
    <text evidence="2">Homotrimer.</text>
</comment>
<comment type="similarity">
    <text evidence="4">Belongs to the SAM hydrolase / SAM-dependent halogenase family.</text>
</comment>
<organism>
    <name type="scientific">Methanocaldococcus jannaschii (strain ATCC 43067 / DSM 2661 / JAL-1 / JCM 10045 / NBRC 100440)</name>
    <name type="common">Methanococcus jannaschii</name>
    <dbReference type="NCBI Taxonomy" id="243232"/>
    <lineage>
        <taxon>Archaea</taxon>
        <taxon>Methanobacteriati</taxon>
        <taxon>Methanobacteriota</taxon>
        <taxon>Methanomada group</taxon>
        <taxon>Methanococci</taxon>
        <taxon>Methanococcales</taxon>
        <taxon>Methanocaldococcaceae</taxon>
        <taxon>Methanocaldococcus</taxon>
    </lineage>
</organism>